<protein>
    <recommendedName>
        <fullName evidence="1">RNA chaperone ProQ</fullName>
    </recommendedName>
</protein>
<evidence type="ECO:0000255" key="1">
    <source>
        <dbReference type="HAMAP-Rule" id="MF_00749"/>
    </source>
</evidence>
<evidence type="ECO:0000256" key="2">
    <source>
        <dbReference type="SAM" id="MobiDB-lite"/>
    </source>
</evidence>
<accession>A9MV61</accession>
<dbReference type="EMBL" id="CP000886">
    <property type="protein sequence ID" value="ABX66771.1"/>
    <property type="molecule type" value="Genomic_DNA"/>
</dbReference>
<dbReference type="RefSeq" id="WP_000431401.1">
    <property type="nucleotide sequence ID" value="NC_010102.1"/>
</dbReference>
<dbReference type="SMR" id="A9MV61"/>
<dbReference type="KEGG" id="spq:SPAB_01363"/>
<dbReference type="PATRIC" id="fig|1016998.12.peg.1285"/>
<dbReference type="HOGENOM" id="CLU_113254_0_0_6"/>
<dbReference type="BioCyc" id="SENT1016998:SPAB_RS05580-MONOMER"/>
<dbReference type="Proteomes" id="UP000008556">
    <property type="component" value="Chromosome"/>
</dbReference>
<dbReference type="GO" id="GO:0005829">
    <property type="term" value="C:cytosol"/>
    <property type="evidence" value="ECO:0007669"/>
    <property type="project" value="TreeGrafter"/>
</dbReference>
<dbReference type="GO" id="GO:0033592">
    <property type="term" value="F:RNA strand annealing activity"/>
    <property type="evidence" value="ECO:0007669"/>
    <property type="project" value="UniProtKB-UniRule"/>
</dbReference>
<dbReference type="GO" id="GO:0034057">
    <property type="term" value="F:RNA strand-exchange activity"/>
    <property type="evidence" value="ECO:0007669"/>
    <property type="project" value="UniProtKB-UniRule"/>
</dbReference>
<dbReference type="GO" id="GO:0010608">
    <property type="term" value="P:post-transcriptional regulation of gene expression"/>
    <property type="evidence" value="ECO:0007669"/>
    <property type="project" value="InterPro"/>
</dbReference>
<dbReference type="FunFam" id="1.10.1710.10:FF:000001">
    <property type="entry name" value="RNA chaperone ProQ"/>
    <property type="match status" value="1"/>
</dbReference>
<dbReference type="Gene3D" id="1.10.1710.10">
    <property type="entry name" value="ProQ/FinO domain"/>
    <property type="match status" value="1"/>
</dbReference>
<dbReference type="HAMAP" id="MF_00749">
    <property type="entry name" value="ProQ"/>
    <property type="match status" value="1"/>
</dbReference>
<dbReference type="InterPro" id="IPR023529">
    <property type="entry name" value="ProQ"/>
</dbReference>
<dbReference type="InterPro" id="IPR016103">
    <property type="entry name" value="ProQ/FinO"/>
</dbReference>
<dbReference type="InterPro" id="IPR036442">
    <property type="entry name" value="ProQ/FinO_sf"/>
</dbReference>
<dbReference type="InterPro" id="IPR035236">
    <property type="entry name" value="ProQ_C"/>
</dbReference>
<dbReference type="NCBIfam" id="NF003434">
    <property type="entry name" value="PRK04950.1"/>
    <property type="match status" value="1"/>
</dbReference>
<dbReference type="PANTHER" id="PTHR38106">
    <property type="entry name" value="RNA CHAPERONE PROQ"/>
    <property type="match status" value="1"/>
</dbReference>
<dbReference type="PANTHER" id="PTHR38106:SF1">
    <property type="entry name" value="RNA CHAPERONE PROQ"/>
    <property type="match status" value="1"/>
</dbReference>
<dbReference type="Pfam" id="PF04352">
    <property type="entry name" value="ProQ"/>
    <property type="match status" value="1"/>
</dbReference>
<dbReference type="Pfam" id="PF17516">
    <property type="entry name" value="ProQ_C"/>
    <property type="match status" value="1"/>
</dbReference>
<dbReference type="SMART" id="SM00945">
    <property type="entry name" value="ProQ"/>
    <property type="match status" value="1"/>
</dbReference>
<dbReference type="SUPFAM" id="SSF48657">
    <property type="entry name" value="FinO-like"/>
    <property type="match status" value="1"/>
</dbReference>
<name>PROQ_SALPB</name>
<feature type="chain" id="PRO_1000083489" description="RNA chaperone ProQ">
    <location>
        <begin position="1"/>
        <end position="228"/>
    </location>
</feature>
<feature type="region of interest" description="Disordered" evidence="2">
    <location>
        <begin position="107"/>
        <end position="178"/>
    </location>
</feature>
<feature type="compositionally biased region" description="Basic and acidic residues" evidence="2">
    <location>
        <begin position="117"/>
        <end position="136"/>
    </location>
</feature>
<feature type="compositionally biased region" description="Basic and acidic residues" evidence="2">
    <location>
        <begin position="146"/>
        <end position="175"/>
    </location>
</feature>
<reference key="1">
    <citation type="submission" date="2007-11" db="EMBL/GenBank/DDBJ databases">
        <authorList>
            <consortium name="The Salmonella enterica serovar Paratyphi B Genome Sequencing Project"/>
            <person name="McClelland M."/>
            <person name="Sanderson E.K."/>
            <person name="Porwollik S."/>
            <person name="Spieth J."/>
            <person name="Clifton W.S."/>
            <person name="Fulton R."/>
            <person name="Cordes M."/>
            <person name="Wollam A."/>
            <person name="Shah N."/>
            <person name="Pepin K."/>
            <person name="Bhonagiri V."/>
            <person name="Nash W."/>
            <person name="Johnson M."/>
            <person name="Thiruvilangam P."/>
            <person name="Wilson R."/>
        </authorList>
    </citation>
    <scope>NUCLEOTIDE SEQUENCE [LARGE SCALE GENOMIC DNA]</scope>
    <source>
        <strain>ATCC BAA-1250 / SPB7</strain>
    </source>
</reference>
<gene>
    <name evidence="1" type="primary">proQ</name>
    <name type="ordered locus">SPAB_01363</name>
</gene>
<keyword id="KW-0143">Chaperone</keyword>
<keyword id="KW-0963">Cytoplasm</keyword>
<keyword id="KW-0694">RNA-binding</keyword>
<comment type="function">
    <text evidence="1">RNA chaperone with significant RNA binding, RNA strand exchange and RNA duplexing activities. May regulate ProP activity through an RNA-based, post-transcriptional mechanism.</text>
</comment>
<comment type="subcellular location">
    <subcellularLocation>
        <location evidence="1">Cytoplasm</location>
    </subcellularLocation>
</comment>
<comment type="similarity">
    <text evidence="1">Belongs to the ProQ family.</text>
</comment>
<organism>
    <name type="scientific">Salmonella paratyphi B (strain ATCC BAA-1250 / SPB7)</name>
    <dbReference type="NCBI Taxonomy" id="1016998"/>
    <lineage>
        <taxon>Bacteria</taxon>
        <taxon>Pseudomonadati</taxon>
        <taxon>Pseudomonadota</taxon>
        <taxon>Gammaproteobacteria</taxon>
        <taxon>Enterobacterales</taxon>
        <taxon>Enterobacteriaceae</taxon>
        <taxon>Salmonella</taxon>
    </lineage>
</organism>
<proteinExistence type="inferred from homology"/>
<sequence length="228" mass="25438">MENQPKLNSSKEVIAFLAERFPHCFSAEGEARPLKIGIFQDLVERVGGEMNLSKTQLRSALRLYTSSWRYLYGVKPGATRVDLDGNPCGELEEQHVEHARKQLEEAKARVQAQRAEQQAKKREAAAAAGEKEDAPRRERKPRPVARRKEGAERKPRADKPTTKAPRAPREEKHTPVSDISVLTVGQSLKVKAGNNAMDATVLEITKDGVRVQLNSGMSLIVRAEHLVF</sequence>